<keyword id="KW-0007">Acetylation</keyword>
<keyword id="KW-0025">Alternative splicing</keyword>
<keyword id="KW-0256">Endoplasmic reticulum</keyword>
<keyword id="KW-0333">Golgi apparatus</keyword>
<keyword id="KW-0472">Membrane</keyword>
<keyword id="KW-0597">Phosphoprotein</keyword>
<keyword id="KW-0653">Protein transport</keyword>
<keyword id="KW-1185">Reference proteome</keyword>
<keyword id="KW-0812">Transmembrane</keyword>
<keyword id="KW-1133">Transmembrane helix</keyword>
<keyword id="KW-0813">Transport</keyword>
<dbReference type="EMBL" id="BC058153">
    <property type="protein sequence ID" value="AAH58153.1"/>
    <property type="status" value="ALT_INIT"/>
    <property type="molecule type" value="mRNA"/>
</dbReference>
<dbReference type="EMBL" id="CB797587">
    <property type="status" value="NOT_ANNOTATED_CDS"/>
    <property type="molecule type" value="mRNA"/>
</dbReference>
<dbReference type="RefSeq" id="NP_001014810.1">
    <property type="nucleotide sequence ID" value="NM_001014810.1"/>
</dbReference>
<dbReference type="RefSeq" id="NP_942029.2">
    <property type="nucleotide sequence ID" value="NM_198734.2"/>
</dbReference>
<dbReference type="CORUM" id="Q6PEC3"/>
<dbReference type="FunCoup" id="Q6PEC3">
    <property type="interactions" value="1230"/>
</dbReference>
<dbReference type="IntAct" id="Q6PEC3">
    <property type="interactions" value="2"/>
</dbReference>
<dbReference type="MINT" id="Q6PEC3"/>
<dbReference type="PhosphoSitePlus" id="Q6PEC3"/>
<dbReference type="Ensembl" id="ENSRNOT00000044145.6">
    <molecule id="Q6PEC3-1"/>
    <property type="protein sequence ID" value="ENSRNOP00000045414.5"/>
    <property type="gene ID" value="ENSRNOG00000055286.2"/>
</dbReference>
<dbReference type="GeneID" id="292768"/>
<dbReference type="KEGG" id="rno:292768"/>
<dbReference type="UCSC" id="RGD:735199">
    <molecule id="Q6PEC3-1"/>
    <property type="organism name" value="rat"/>
</dbReference>
<dbReference type="AGR" id="RGD:735199"/>
<dbReference type="CTD" id="90522"/>
<dbReference type="RGD" id="735199">
    <property type="gene designation" value="Yif1b"/>
</dbReference>
<dbReference type="GeneTree" id="ENSGT00390000009423"/>
<dbReference type="HOGENOM" id="CLU_047877_1_1_1"/>
<dbReference type="InParanoid" id="Q6PEC3"/>
<dbReference type="OrthoDB" id="56840at9989"/>
<dbReference type="PhylomeDB" id="Q6PEC3"/>
<dbReference type="PRO" id="PR:Q6PEC3"/>
<dbReference type="Proteomes" id="UP000002494">
    <property type="component" value="Chromosome 1"/>
</dbReference>
<dbReference type="Bgee" id="ENSRNOG00000020616">
    <property type="expression patterns" value="Expressed in thymus and 19 other cell types or tissues"/>
</dbReference>
<dbReference type="ExpressionAtlas" id="Q6PEC3">
    <property type="expression patterns" value="baseline"/>
</dbReference>
<dbReference type="GO" id="GO:0030134">
    <property type="term" value="C:COPII-coated ER to Golgi transport vesicle"/>
    <property type="evidence" value="ECO:0000318"/>
    <property type="project" value="GO_Central"/>
</dbReference>
<dbReference type="GO" id="GO:0005783">
    <property type="term" value="C:endoplasmic reticulum"/>
    <property type="evidence" value="ECO:0000314"/>
    <property type="project" value="UniProtKB"/>
</dbReference>
<dbReference type="GO" id="GO:0005789">
    <property type="term" value="C:endoplasmic reticulum membrane"/>
    <property type="evidence" value="ECO:0000318"/>
    <property type="project" value="GO_Central"/>
</dbReference>
<dbReference type="GO" id="GO:0005793">
    <property type="term" value="C:endoplasmic reticulum-Golgi intermediate compartment"/>
    <property type="evidence" value="ECO:0000314"/>
    <property type="project" value="UniProtKB"/>
</dbReference>
<dbReference type="GO" id="GO:0033116">
    <property type="term" value="C:endoplasmic reticulum-Golgi intermediate compartment membrane"/>
    <property type="evidence" value="ECO:0007669"/>
    <property type="project" value="UniProtKB-SubCell"/>
</dbReference>
<dbReference type="GO" id="GO:0005794">
    <property type="term" value="C:Golgi apparatus"/>
    <property type="evidence" value="ECO:0000314"/>
    <property type="project" value="UniProtKB"/>
</dbReference>
<dbReference type="GO" id="GO:0000139">
    <property type="term" value="C:Golgi membrane"/>
    <property type="evidence" value="ECO:0000318"/>
    <property type="project" value="GO_Central"/>
</dbReference>
<dbReference type="GO" id="GO:0060271">
    <property type="term" value="P:cilium assembly"/>
    <property type="evidence" value="ECO:0000266"/>
    <property type="project" value="RGD"/>
</dbReference>
<dbReference type="GO" id="GO:0006888">
    <property type="term" value="P:endoplasmic reticulum to Golgi vesicle-mediated transport"/>
    <property type="evidence" value="ECO:0000250"/>
    <property type="project" value="UniProtKB"/>
</dbReference>
<dbReference type="GO" id="GO:0006612">
    <property type="term" value="P:protein targeting to membrane"/>
    <property type="evidence" value="ECO:0000250"/>
    <property type="project" value="UniProtKB"/>
</dbReference>
<dbReference type="GO" id="GO:0015031">
    <property type="term" value="P:protein transport"/>
    <property type="evidence" value="ECO:0007669"/>
    <property type="project" value="UniProtKB-KW"/>
</dbReference>
<dbReference type="GO" id="GO:0120316">
    <property type="term" value="P:sperm flagellum assembly"/>
    <property type="evidence" value="ECO:0000250"/>
    <property type="project" value="UniProtKB"/>
</dbReference>
<dbReference type="InterPro" id="IPR005578">
    <property type="entry name" value="Yif1_fam"/>
</dbReference>
<dbReference type="PANTHER" id="PTHR14083:SF1">
    <property type="entry name" value="PROTEIN YIF1B"/>
    <property type="match status" value="1"/>
</dbReference>
<dbReference type="PANTHER" id="PTHR14083">
    <property type="entry name" value="YIP1 INTERACTING FACTOR HOMOLOG YIF1 PROTEIN"/>
    <property type="match status" value="1"/>
</dbReference>
<dbReference type="Pfam" id="PF03878">
    <property type="entry name" value="YIF1"/>
    <property type="match status" value="2"/>
</dbReference>
<comment type="function">
    <text evidence="2 5">Functions in endoplasmic reticulum to Golgi vesicle-mediated transport and regulates the proper organization of the endoplasmic reticulum and the Golgi (By similarity). Plays a key role in targeting to neuronal dendrites receptors such as HTR1A (PubMed:18685031). Plays also a role in primary cilium and sperm flagellum assembly probably through protein transport to these compartments (By similarity).</text>
</comment>
<comment type="subunit">
    <text evidence="1 5">Interacts with HTR1A (via C-terminus) (PubMed:18685031). Interacts with ABCB9 (via TMD0); this interaction allows (but is not essential) the ER-to-Golgi trafficking and strongly depends on a salt bridge within TMD0 (By similarity).</text>
</comment>
<comment type="subcellular location">
    <subcellularLocation>
        <location evidence="6">Endoplasmic reticulum membrane</location>
        <topology evidence="3">Multi-pass membrane protein</topology>
    </subcellularLocation>
    <subcellularLocation>
        <location evidence="6">Golgi apparatus membrane</location>
        <topology evidence="3">Multi-pass membrane protein</topology>
    </subcellularLocation>
    <subcellularLocation>
        <location evidence="5 6">Endoplasmic reticulum-Golgi intermediate compartment membrane</location>
        <topology evidence="3">Multi-pass membrane protein</topology>
    </subcellularLocation>
    <text evidence="6">Shuttles between the endoplasmic reticulum, the intermediate compartment and the Golgi apparatus.</text>
</comment>
<comment type="alternative products">
    <event type="alternative splicing"/>
    <isoform>
        <id>Q6PEC3-1</id>
        <name>1</name>
        <sequence type="displayed"/>
    </isoform>
    <isoform>
        <id>Q6PEC3-2</id>
        <name>2</name>
        <sequence type="described" ref="VSP_028657"/>
    </isoform>
</comment>
<comment type="tissue specificity">
    <text evidence="5">Highly expressed in brain. Expressed in heart, kidney, and lung and lower levels in spleen, muscle, and intestine (at protein level) (PubMed:18685031). Expressed in serotoninergic neurons (at protein level) (PubMed:18685031).</text>
</comment>
<comment type="similarity">
    <text evidence="8">Belongs to the YIF1 family.</text>
</comment>
<comment type="sequence caution" evidence="8">
    <conflict type="erroneous initiation">
        <sequence resource="EMBL-CDS" id="AAH58153"/>
    </conflict>
    <text>Truncated N-terminus.</text>
</comment>
<proteinExistence type="evidence at protein level"/>
<name>YIF1B_RAT</name>
<evidence type="ECO:0000250" key="1">
    <source>
        <dbReference type="UniProtKB" id="Q5BJH7"/>
    </source>
</evidence>
<evidence type="ECO:0000250" key="2">
    <source>
        <dbReference type="UniProtKB" id="Q9CX30"/>
    </source>
</evidence>
<evidence type="ECO:0000255" key="3"/>
<evidence type="ECO:0000256" key="4">
    <source>
        <dbReference type="SAM" id="MobiDB-lite"/>
    </source>
</evidence>
<evidence type="ECO:0000269" key="5">
    <source>
    </source>
</evidence>
<evidence type="ECO:0000269" key="6">
    <source>
    </source>
</evidence>
<evidence type="ECO:0000303" key="7">
    <source>
    </source>
</evidence>
<evidence type="ECO:0000305" key="8"/>
<evidence type="ECO:0000312" key="9">
    <source>
        <dbReference type="RGD" id="735199"/>
    </source>
</evidence>
<protein>
    <recommendedName>
        <fullName>Protein YIF1B</fullName>
    </recommendedName>
    <alternativeName>
        <fullName>YIP1-interacting factor homolog B</fullName>
    </alternativeName>
</protein>
<reference key="1">
    <citation type="journal article" date="2004" name="Genome Res.">
        <title>The status, quality, and expansion of the NIH full-length cDNA project: the Mammalian Gene Collection (MGC).</title>
        <authorList>
            <consortium name="The MGC Project Team"/>
        </authorList>
    </citation>
    <scope>NUCLEOTIDE SEQUENCE [LARGE SCALE MRNA] (ISOFORM 2)</scope>
    <source>
        <tissue>Pituitary</tissue>
    </source>
</reference>
<reference key="2">
    <citation type="submission" date="2003-05" db="EMBL/GenBank/DDBJ databases">
        <title>Amgen rat EST program.</title>
        <authorList>
            <consortium name="Amgen EST program"/>
        </authorList>
    </citation>
    <scope>NUCLEOTIDE SEQUENCE [LARGE SCALE MRNA] OF 1-126 (ISOFORM 1)</scope>
</reference>
<reference key="3">
    <citation type="journal article" date="2008" name="J. Neurosci.">
        <title>Targeting of the 5-HT1A serotonin receptor to neuronal dendrites is mediated by Yif1B.</title>
        <authorList>
            <person name="Carrel D."/>
            <person name="Masson J."/>
            <person name="Al Awabdh S."/>
            <person name="Capra C.B."/>
            <person name="Lenkei Z."/>
            <person name="Hamon M."/>
            <person name="Emerit M.B."/>
            <person name="Darmon M."/>
        </authorList>
    </citation>
    <scope>TISSUE SPECIFICITY</scope>
    <scope>INTERACTION WITH HTR1A</scope>
    <scope>SUBCELLULAR LOCATION</scope>
    <scope>FUNCTION</scope>
</reference>
<reference key="4">
    <citation type="journal article" date="2015" name="Traffic">
        <title>Yif1B Is Involved in the Anterograde Traffic Pathway and the Golgi Architecture.</title>
        <authorList>
            <person name="Alterio J."/>
            <person name="Masson J."/>
            <person name="Diaz J."/>
            <person name="Chachlaki K."/>
            <person name="Salman H."/>
            <person name="Areias J."/>
            <person name="Al Awabdh S."/>
            <person name="Emerit M.B."/>
            <person name="Darmon M."/>
        </authorList>
    </citation>
    <scope>SUBCELLULAR LOCATION</scope>
</reference>
<sequence>MHATGLAAPAGTPRLRKWPSKRRVPVSQPGMADPHQFFDDTSSAPSRGYGGQPSPGSLGYPTSSSEAAFLAAPMSNMAMAYGSSLAAQGKELVDKNIDRFIPVSKLKYYFAVDTVYVGKKLGLLVFPYLHQDWEVQYQQDTPVAPRFDINAPDLYIPAMAFITYILVAGLALGTQDRMIGGVLTGLLFGKIGYYLVLAWCCVSIFVFMIRTLRLKILAQAAAEGVPVRGARNQLRMYLTMAVAAAQPVLMYWLTFHLVR</sequence>
<feature type="chain" id="PRO_0000307260" description="Protein YIF1B">
    <location>
        <begin position="1"/>
        <end position="259"/>
    </location>
</feature>
<feature type="topological domain" description="Cytoplasmic" evidence="3">
    <location>
        <begin position="9"/>
        <end position="153"/>
    </location>
</feature>
<feature type="transmembrane region" description="Helical" evidence="3">
    <location>
        <begin position="154"/>
        <end position="174"/>
    </location>
</feature>
<feature type="topological domain" description="Extracellular" evidence="3">
    <location>
        <begin position="175"/>
        <end position="186"/>
    </location>
</feature>
<feature type="transmembrane region" description="Helical" evidence="3">
    <location>
        <begin position="187"/>
        <end position="207"/>
    </location>
</feature>
<feature type="topological domain" description="Cytoplasmic" evidence="3">
    <location>
        <begin position="208"/>
        <end position="237"/>
    </location>
</feature>
<feature type="transmembrane region" description="Helical" evidence="3">
    <location>
        <begin position="238"/>
        <end position="258"/>
    </location>
</feature>
<feature type="topological domain" description="Extracellular" evidence="3">
    <location>
        <position position="259"/>
    </location>
</feature>
<feature type="region of interest" description="Disordered" evidence="4">
    <location>
        <begin position="1"/>
        <end position="61"/>
    </location>
</feature>
<feature type="compositionally biased region" description="Basic residues" evidence="4">
    <location>
        <begin position="14"/>
        <end position="24"/>
    </location>
</feature>
<feature type="modified residue" description="N-acetylmethionine" evidence="2">
    <location>
        <position position="1"/>
    </location>
</feature>
<feature type="modified residue" description="Phosphothreonine" evidence="2">
    <location>
        <position position="12"/>
    </location>
</feature>
<feature type="modified residue" description="Phosphoserine" evidence="1">
    <location>
        <position position="64"/>
    </location>
</feature>
<feature type="splice variant" id="VSP_028657" description="In isoform 2." evidence="7">
    <original>MHATGLAAPAGTPRLRKWP</original>
    <variation>MPRPGRGRIAA</variation>
    <location>
        <begin position="1"/>
        <end position="19"/>
    </location>
</feature>
<accession>Q6PEC3</accession>
<organism>
    <name type="scientific">Rattus norvegicus</name>
    <name type="common">Rat</name>
    <dbReference type="NCBI Taxonomy" id="10116"/>
    <lineage>
        <taxon>Eukaryota</taxon>
        <taxon>Metazoa</taxon>
        <taxon>Chordata</taxon>
        <taxon>Craniata</taxon>
        <taxon>Vertebrata</taxon>
        <taxon>Euteleostomi</taxon>
        <taxon>Mammalia</taxon>
        <taxon>Eutheria</taxon>
        <taxon>Euarchontoglires</taxon>
        <taxon>Glires</taxon>
        <taxon>Rodentia</taxon>
        <taxon>Myomorpha</taxon>
        <taxon>Muroidea</taxon>
        <taxon>Muridae</taxon>
        <taxon>Murinae</taxon>
        <taxon>Rattus</taxon>
    </lineage>
</organism>
<gene>
    <name evidence="9" type="primary">Yif1b</name>
</gene>